<gene>
    <name type="primary">V-RAF</name>
</gene>
<reference key="1">
    <citation type="journal article" date="1984" name="Science">
        <title>A common onc gene sequence transduced by avian carcinoma virus MH2 and by murine sarcoma virus 3611.</title>
        <authorList>
            <person name="Kan N.C."/>
            <person name="Flordellis C.S."/>
            <person name="Mark G.E."/>
            <person name="Duesberg P.H."/>
            <person name="Papas T.S."/>
        </authorList>
    </citation>
    <scope>NUCLEOTIDE SEQUENCE [GENOMIC RNA]</scope>
</reference>
<reference key="2">
    <citation type="journal article" date="1984" name="Science">
        <title>Primary structure of v-raf: relatedness to the src family of oncogenes.</title>
        <authorList>
            <person name="Mark G.E."/>
            <person name="Rapp U.R."/>
        </authorList>
    </citation>
    <scope>NUCLEOTIDE SEQUENCE [GENOMIC RNA]</scope>
</reference>
<accession>P00532</accession>
<name>RAF_MSV36</name>
<organism>
    <name type="scientific">Murine sarcoma virus 3611</name>
    <dbReference type="NCBI Taxonomy" id="11812"/>
    <lineage>
        <taxon>Viruses</taxon>
        <taxon>Riboviria</taxon>
        <taxon>Pararnavirae</taxon>
        <taxon>Artverviricota</taxon>
        <taxon>Revtraviricetes</taxon>
        <taxon>Ortervirales</taxon>
        <taxon>Retroviridae</taxon>
        <taxon>Orthoretrovirinae</taxon>
        <taxon>Gammaretrovirus</taxon>
        <taxon>Moloney murine sarcoma virus</taxon>
    </lineage>
</organism>
<dbReference type="EC" id="2.7.11.1"/>
<dbReference type="EMBL" id="K01691">
    <property type="protein sequence ID" value="AAA46579.1"/>
    <property type="status" value="ALT_INIT"/>
    <property type="molecule type" value="Genomic_RNA"/>
</dbReference>
<dbReference type="PIR" id="A00638">
    <property type="entry name" value="TVMVF6"/>
</dbReference>
<dbReference type="SMR" id="P00532"/>
<dbReference type="BindingDB" id="P00532"/>
<dbReference type="BRENDA" id="2.7.10.2">
    <property type="organism ID" value="3471"/>
</dbReference>
<dbReference type="GO" id="GO:0005524">
    <property type="term" value="F:ATP binding"/>
    <property type="evidence" value="ECO:0007669"/>
    <property type="project" value="UniProtKB-KW"/>
</dbReference>
<dbReference type="GO" id="GO:0106310">
    <property type="term" value="F:protein serine kinase activity"/>
    <property type="evidence" value="ECO:0007669"/>
    <property type="project" value="RHEA"/>
</dbReference>
<dbReference type="GO" id="GO:0004674">
    <property type="term" value="F:protein serine/threonine kinase activity"/>
    <property type="evidence" value="ECO:0007669"/>
    <property type="project" value="UniProtKB-KW"/>
</dbReference>
<dbReference type="FunFam" id="3.30.200.20:FF:000024">
    <property type="entry name" value="B-Raf proto-oncogene serine/threonine-protein kinase"/>
    <property type="match status" value="1"/>
</dbReference>
<dbReference type="FunFam" id="1.10.510.10:FF:000036">
    <property type="entry name" value="RAF proto-oncogene serine/threonine-protein kinase"/>
    <property type="match status" value="1"/>
</dbReference>
<dbReference type="Gene3D" id="3.30.200.20">
    <property type="entry name" value="Phosphorylase Kinase, domain 1"/>
    <property type="match status" value="1"/>
</dbReference>
<dbReference type="Gene3D" id="1.10.510.10">
    <property type="entry name" value="Transferase(Phosphotransferase) domain 1"/>
    <property type="match status" value="1"/>
</dbReference>
<dbReference type="InterPro" id="IPR011009">
    <property type="entry name" value="Kinase-like_dom_sf"/>
</dbReference>
<dbReference type="InterPro" id="IPR000719">
    <property type="entry name" value="Prot_kinase_dom"/>
</dbReference>
<dbReference type="InterPro" id="IPR017441">
    <property type="entry name" value="Protein_kinase_ATP_BS"/>
</dbReference>
<dbReference type="InterPro" id="IPR001245">
    <property type="entry name" value="Ser-Thr/Tyr_kinase_cat_dom"/>
</dbReference>
<dbReference type="InterPro" id="IPR008271">
    <property type="entry name" value="Ser/Thr_kinase_AS"/>
</dbReference>
<dbReference type="InterPro" id="IPR051681">
    <property type="entry name" value="Ser/Thr_Kinases-Pseudokinases"/>
</dbReference>
<dbReference type="PANTHER" id="PTHR44329:SF22">
    <property type="entry name" value="RAF PROTO-ONCOGENE SERINE_THREONINE-PROTEIN KINASE"/>
    <property type="match status" value="1"/>
</dbReference>
<dbReference type="PANTHER" id="PTHR44329">
    <property type="entry name" value="SERINE/THREONINE-PROTEIN KINASE TNNI3K-RELATED"/>
    <property type="match status" value="1"/>
</dbReference>
<dbReference type="Pfam" id="PF07714">
    <property type="entry name" value="PK_Tyr_Ser-Thr"/>
    <property type="match status" value="1"/>
</dbReference>
<dbReference type="PIRSF" id="PIRSF000654">
    <property type="entry name" value="Integrin-linked_kinase"/>
    <property type="match status" value="1"/>
</dbReference>
<dbReference type="SMART" id="SM00220">
    <property type="entry name" value="S_TKc"/>
    <property type="match status" value="1"/>
</dbReference>
<dbReference type="SUPFAM" id="SSF56112">
    <property type="entry name" value="Protein kinase-like (PK-like)"/>
    <property type="match status" value="1"/>
</dbReference>
<dbReference type="PROSITE" id="PS00107">
    <property type="entry name" value="PROTEIN_KINASE_ATP"/>
    <property type="match status" value="1"/>
</dbReference>
<dbReference type="PROSITE" id="PS50011">
    <property type="entry name" value="PROTEIN_KINASE_DOM"/>
    <property type="match status" value="1"/>
</dbReference>
<dbReference type="PROSITE" id="PS00108">
    <property type="entry name" value="PROTEIN_KINASE_ST"/>
    <property type="match status" value="1"/>
</dbReference>
<comment type="catalytic activity">
    <reaction>
        <text>L-seryl-[protein] + ATP = O-phospho-L-seryl-[protein] + ADP + H(+)</text>
        <dbReference type="Rhea" id="RHEA:17989"/>
        <dbReference type="Rhea" id="RHEA-COMP:9863"/>
        <dbReference type="Rhea" id="RHEA-COMP:11604"/>
        <dbReference type="ChEBI" id="CHEBI:15378"/>
        <dbReference type="ChEBI" id="CHEBI:29999"/>
        <dbReference type="ChEBI" id="CHEBI:30616"/>
        <dbReference type="ChEBI" id="CHEBI:83421"/>
        <dbReference type="ChEBI" id="CHEBI:456216"/>
        <dbReference type="EC" id="2.7.11.1"/>
    </reaction>
</comment>
<comment type="catalytic activity">
    <reaction>
        <text>L-threonyl-[protein] + ATP = O-phospho-L-threonyl-[protein] + ADP + H(+)</text>
        <dbReference type="Rhea" id="RHEA:46608"/>
        <dbReference type="Rhea" id="RHEA-COMP:11060"/>
        <dbReference type="Rhea" id="RHEA-COMP:11605"/>
        <dbReference type="ChEBI" id="CHEBI:15378"/>
        <dbReference type="ChEBI" id="CHEBI:30013"/>
        <dbReference type="ChEBI" id="CHEBI:30616"/>
        <dbReference type="ChEBI" id="CHEBI:61977"/>
        <dbReference type="ChEBI" id="CHEBI:456216"/>
        <dbReference type="EC" id="2.7.11.1"/>
    </reaction>
</comment>
<comment type="miscellaneous">
    <text>This protein is synthesized as a Gag-Raf polyprotein.</text>
</comment>
<comment type="similarity">
    <text evidence="3">Belongs to the protein kinase superfamily. TKL Ser/Thr protein kinase family. RAF subfamily.</text>
</comment>
<comment type="sequence caution" evidence="3">
    <conflict type="erroneous initiation">
        <sequence resource="EMBL-CDS" id="AAA46579"/>
    </conflict>
</comment>
<proteinExistence type="inferred from homology"/>
<sequence>EKNKIRPRGQRDSSYYWKMEASEVMLSTRIGSGSFGTVYKGKWHGDVAVKILKVVDPTPEQLQAFRNEVAVLRKTRHVNILLFMGYMTKDNLAIVTQWCEGSSLYKHLHVQETKFQMFQLIDIARQTAQGMDYLHAKNIIHRDMKSNNIFLHEGLTVKIGDFGLATVKSRWSGSQQVEQPTGSVLWMAPEVIRMQDDNPFSFQSDVYSYGIVLYELMAGELPYAHINNRDQIIFMVGRGYASPDLSRLYKNCPKAIKRLVADCVKKVKEERPLFPQILSSIELLQHSLPKINRSAPEPSLHRAAHTEDINACTLTTSPRLPVF</sequence>
<feature type="chain" id="PRO_0000086601" description="Serine/threonine-protein kinase-transforming protein raf">
    <location>
        <begin position="1"/>
        <end position="323"/>
    </location>
</feature>
<feature type="domain" description="Protein kinase" evidence="1">
    <location>
        <begin position="24"/>
        <end position="284"/>
    </location>
</feature>
<feature type="active site" description="Proton acceptor" evidence="1 2">
    <location>
        <position position="143"/>
    </location>
</feature>
<feature type="binding site" evidence="1">
    <location>
        <begin position="30"/>
        <end position="38"/>
    </location>
    <ligand>
        <name>ATP</name>
        <dbReference type="ChEBI" id="CHEBI:30616"/>
    </ligand>
</feature>
<feature type="binding site" evidence="1">
    <location>
        <position position="50"/>
    </location>
    <ligand>
        <name>ATP</name>
        <dbReference type="ChEBI" id="CHEBI:30616"/>
    </ligand>
</feature>
<keyword id="KW-0067">ATP-binding</keyword>
<keyword id="KW-0418">Kinase</keyword>
<keyword id="KW-0547">Nucleotide-binding</keyword>
<keyword id="KW-0553">Oncogene</keyword>
<keyword id="KW-0723">Serine/threonine-protein kinase</keyword>
<keyword id="KW-0808">Transferase</keyword>
<organismHost>
    <name type="scientific">Mus musculus</name>
    <name type="common">Mouse</name>
    <dbReference type="NCBI Taxonomy" id="10090"/>
</organismHost>
<protein>
    <recommendedName>
        <fullName>Serine/threonine-protein kinase-transforming protein raf</fullName>
        <ecNumber>2.7.11.1</ecNumber>
    </recommendedName>
</protein>
<evidence type="ECO:0000255" key="1">
    <source>
        <dbReference type="PROSITE-ProRule" id="PRU00159"/>
    </source>
</evidence>
<evidence type="ECO:0000255" key="2">
    <source>
        <dbReference type="PROSITE-ProRule" id="PRU10027"/>
    </source>
</evidence>
<evidence type="ECO:0000305" key="3"/>